<evidence type="ECO:0000255" key="1">
    <source>
        <dbReference type="HAMAP-Rule" id="MF_01588"/>
    </source>
</evidence>
<evidence type="ECO:0000305" key="2"/>
<sequence>MEPIEQQLTELRTTLRHHEYLYHVMDAPEILDAEYDRLMRELRELEAQRPDLITPDSPTQRVGAAPLTAFNQIRHEVPMLSLDNVFDEESFLAFNKRVQDRLKSTENVIWCCELKLDGLAVSILYENGVLVSAATRGDGTTGEDITSNVRTIRAIPLKLHGDNIPARLEVRGEVFLPQTGFEKINEDARRTGGKVFANPRNAAAGSLRQLDPRITAKRPLTFFCYGVGILEGGELPDTHLGRLLQFKAWGLPVSDRVTLCDSPQAVLDFYHNVEKDRPTLGFDIDGVVIKVNSLALQEQLGFVARAPRWAVAFKFPAQEQMTFVRDVEFQVGRTGAITPVARLEPVQVAGVLVSNATLHNADEIERLGLRIGDKVVIRRAGDVIPQVVNVVLSERPEETRPIVFPTHCPVCGSDVERVEGEAVTRCTGGLICGAQRKESLKHFVSRRAMDVDGMGDKIIDQLVEREYVHTPADLFRLTAGKLTGLDRMGPKSAQNVVNALEKAKATTFARFLYALGIREVGEATAAGLAAYFGTLEALQAATIDELQKVPDVGIVVATHVFNFFAEESNRDVIGQLLAEGVHWPAPVVINAQEIDSPFAGKTVVLTGSLSQMSRDDAKARLVALGAKVAGSVSKKTDLVIAGEAAGSKLAKAQELGITVIDEAEMIRLLGA</sequence>
<gene>
    <name evidence="1" type="primary">ligA</name>
    <name type="ordered locus">STY2663</name>
    <name type="ordered locus">t0431</name>
</gene>
<name>DNLJ_SALTI</name>
<keyword id="KW-0227">DNA damage</keyword>
<keyword id="KW-0234">DNA repair</keyword>
<keyword id="KW-0235">DNA replication</keyword>
<keyword id="KW-0436">Ligase</keyword>
<keyword id="KW-0460">Magnesium</keyword>
<keyword id="KW-0464">Manganese</keyword>
<keyword id="KW-0479">Metal-binding</keyword>
<keyword id="KW-0520">NAD</keyword>
<keyword id="KW-0862">Zinc</keyword>
<reference key="1">
    <citation type="journal article" date="2001" name="Nature">
        <title>Complete genome sequence of a multiple drug resistant Salmonella enterica serovar Typhi CT18.</title>
        <authorList>
            <person name="Parkhill J."/>
            <person name="Dougan G."/>
            <person name="James K.D."/>
            <person name="Thomson N.R."/>
            <person name="Pickard D."/>
            <person name="Wain J."/>
            <person name="Churcher C.M."/>
            <person name="Mungall K.L."/>
            <person name="Bentley S.D."/>
            <person name="Holden M.T.G."/>
            <person name="Sebaihia M."/>
            <person name="Baker S."/>
            <person name="Basham D."/>
            <person name="Brooks K."/>
            <person name="Chillingworth T."/>
            <person name="Connerton P."/>
            <person name="Cronin A."/>
            <person name="Davis P."/>
            <person name="Davies R.M."/>
            <person name="Dowd L."/>
            <person name="White N."/>
            <person name="Farrar J."/>
            <person name="Feltwell T."/>
            <person name="Hamlin N."/>
            <person name="Haque A."/>
            <person name="Hien T.T."/>
            <person name="Holroyd S."/>
            <person name="Jagels K."/>
            <person name="Krogh A."/>
            <person name="Larsen T.S."/>
            <person name="Leather S."/>
            <person name="Moule S."/>
            <person name="O'Gaora P."/>
            <person name="Parry C."/>
            <person name="Quail M.A."/>
            <person name="Rutherford K.M."/>
            <person name="Simmonds M."/>
            <person name="Skelton J."/>
            <person name="Stevens K."/>
            <person name="Whitehead S."/>
            <person name="Barrell B.G."/>
        </authorList>
    </citation>
    <scope>NUCLEOTIDE SEQUENCE [LARGE SCALE GENOMIC DNA]</scope>
    <source>
        <strain>CT18</strain>
    </source>
</reference>
<reference key="2">
    <citation type="journal article" date="2003" name="J. Bacteriol.">
        <title>Comparative genomics of Salmonella enterica serovar Typhi strains Ty2 and CT18.</title>
        <authorList>
            <person name="Deng W."/>
            <person name="Liou S.-R."/>
            <person name="Plunkett G. III"/>
            <person name="Mayhew G.F."/>
            <person name="Rose D.J."/>
            <person name="Burland V."/>
            <person name="Kodoyianni V."/>
            <person name="Schwartz D.C."/>
            <person name="Blattner F.R."/>
        </authorList>
    </citation>
    <scope>NUCLEOTIDE SEQUENCE [LARGE SCALE GENOMIC DNA]</scope>
    <source>
        <strain>ATCC 700931 / Ty2</strain>
    </source>
</reference>
<accession>Q8Z4W4</accession>
<accession>Q83T77</accession>
<protein>
    <recommendedName>
        <fullName evidence="1">DNA ligase</fullName>
        <ecNumber evidence="1">6.5.1.2</ecNumber>
    </recommendedName>
    <alternativeName>
        <fullName evidence="1">Polydeoxyribonucleotide synthase [NAD(+)]</fullName>
    </alternativeName>
</protein>
<dbReference type="EC" id="6.5.1.2" evidence="1"/>
<dbReference type="EMBL" id="AL513382">
    <property type="protein sequence ID" value="CAD07659.1"/>
    <property type="molecule type" value="Genomic_DNA"/>
</dbReference>
<dbReference type="EMBL" id="AE014613">
    <property type="protein sequence ID" value="AAO68148.1"/>
    <property type="molecule type" value="Genomic_DNA"/>
</dbReference>
<dbReference type="RefSeq" id="NP_456964.1">
    <property type="nucleotide sequence ID" value="NC_003198.1"/>
</dbReference>
<dbReference type="RefSeq" id="WP_000433258.1">
    <property type="nucleotide sequence ID" value="NZ_QXGZ01000023.1"/>
</dbReference>
<dbReference type="SMR" id="Q8Z4W4"/>
<dbReference type="STRING" id="220341.gene:17586563"/>
<dbReference type="KEGG" id="stt:t0431"/>
<dbReference type="KEGG" id="sty:STY2663"/>
<dbReference type="PATRIC" id="fig|220341.7.peg.2699"/>
<dbReference type="eggNOG" id="COG0272">
    <property type="taxonomic scope" value="Bacteria"/>
</dbReference>
<dbReference type="HOGENOM" id="CLU_007764_2_1_6"/>
<dbReference type="OMA" id="HDVEHEI"/>
<dbReference type="Proteomes" id="UP000000541">
    <property type="component" value="Chromosome"/>
</dbReference>
<dbReference type="Proteomes" id="UP000002670">
    <property type="component" value="Chromosome"/>
</dbReference>
<dbReference type="GO" id="GO:0005829">
    <property type="term" value="C:cytosol"/>
    <property type="evidence" value="ECO:0007669"/>
    <property type="project" value="TreeGrafter"/>
</dbReference>
<dbReference type="GO" id="GO:0003677">
    <property type="term" value="F:DNA binding"/>
    <property type="evidence" value="ECO:0007669"/>
    <property type="project" value="InterPro"/>
</dbReference>
<dbReference type="GO" id="GO:0003911">
    <property type="term" value="F:DNA ligase (NAD+) activity"/>
    <property type="evidence" value="ECO:0007669"/>
    <property type="project" value="UniProtKB-UniRule"/>
</dbReference>
<dbReference type="GO" id="GO:0046872">
    <property type="term" value="F:metal ion binding"/>
    <property type="evidence" value="ECO:0007669"/>
    <property type="project" value="UniProtKB-KW"/>
</dbReference>
<dbReference type="GO" id="GO:0006281">
    <property type="term" value="P:DNA repair"/>
    <property type="evidence" value="ECO:0007669"/>
    <property type="project" value="UniProtKB-KW"/>
</dbReference>
<dbReference type="GO" id="GO:0006260">
    <property type="term" value="P:DNA replication"/>
    <property type="evidence" value="ECO:0007669"/>
    <property type="project" value="UniProtKB-KW"/>
</dbReference>
<dbReference type="CDD" id="cd17748">
    <property type="entry name" value="BRCT_DNA_ligase_like"/>
    <property type="match status" value="1"/>
</dbReference>
<dbReference type="CDD" id="cd00114">
    <property type="entry name" value="LIGANc"/>
    <property type="match status" value="1"/>
</dbReference>
<dbReference type="FunFam" id="1.10.150.20:FF:000006">
    <property type="entry name" value="DNA ligase"/>
    <property type="match status" value="1"/>
</dbReference>
<dbReference type="FunFam" id="1.10.150.20:FF:000007">
    <property type="entry name" value="DNA ligase"/>
    <property type="match status" value="1"/>
</dbReference>
<dbReference type="FunFam" id="1.10.287.610:FF:000002">
    <property type="entry name" value="DNA ligase"/>
    <property type="match status" value="1"/>
</dbReference>
<dbReference type="FunFam" id="2.40.50.140:FF:000012">
    <property type="entry name" value="DNA ligase"/>
    <property type="match status" value="1"/>
</dbReference>
<dbReference type="FunFam" id="3.30.470.30:FF:000001">
    <property type="entry name" value="DNA ligase"/>
    <property type="match status" value="1"/>
</dbReference>
<dbReference type="FunFam" id="3.40.50.10190:FF:000004">
    <property type="entry name" value="DNA ligase"/>
    <property type="match status" value="1"/>
</dbReference>
<dbReference type="FunFam" id="6.20.10.30:FF:000001">
    <property type="entry name" value="DNA ligase"/>
    <property type="match status" value="1"/>
</dbReference>
<dbReference type="Gene3D" id="3.30.1490.70">
    <property type="match status" value="1"/>
</dbReference>
<dbReference type="Gene3D" id="6.20.10.30">
    <property type="match status" value="1"/>
</dbReference>
<dbReference type="Gene3D" id="1.10.150.20">
    <property type="entry name" value="5' to 3' exonuclease, C-terminal subdomain"/>
    <property type="match status" value="2"/>
</dbReference>
<dbReference type="Gene3D" id="3.40.50.10190">
    <property type="entry name" value="BRCT domain"/>
    <property type="match status" value="1"/>
</dbReference>
<dbReference type="Gene3D" id="3.30.470.30">
    <property type="entry name" value="DNA ligase/mRNA capping enzyme"/>
    <property type="match status" value="1"/>
</dbReference>
<dbReference type="Gene3D" id="1.10.287.610">
    <property type="entry name" value="Helix hairpin bin"/>
    <property type="match status" value="1"/>
</dbReference>
<dbReference type="Gene3D" id="2.40.50.140">
    <property type="entry name" value="Nucleic acid-binding proteins"/>
    <property type="match status" value="1"/>
</dbReference>
<dbReference type="HAMAP" id="MF_01588">
    <property type="entry name" value="DNA_ligase_A"/>
    <property type="match status" value="1"/>
</dbReference>
<dbReference type="InterPro" id="IPR001357">
    <property type="entry name" value="BRCT_dom"/>
</dbReference>
<dbReference type="InterPro" id="IPR036420">
    <property type="entry name" value="BRCT_dom_sf"/>
</dbReference>
<dbReference type="InterPro" id="IPR041663">
    <property type="entry name" value="DisA/LigA_HHH"/>
</dbReference>
<dbReference type="InterPro" id="IPR001679">
    <property type="entry name" value="DNA_ligase"/>
</dbReference>
<dbReference type="InterPro" id="IPR018239">
    <property type="entry name" value="DNA_ligase_AS"/>
</dbReference>
<dbReference type="InterPro" id="IPR033136">
    <property type="entry name" value="DNA_ligase_CS"/>
</dbReference>
<dbReference type="InterPro" id="IPR013839">
    <property type="entry name" value="DNAligase_adenylation"/>
</dbReference>
<dbReference type="InterPro" id="IPR013840">
    <property type="entry name" value="DNAligase_N"/>
</dbReference>
<dbReference type="InterPro" id="IPR003583">
    <property type="entry name" value="Hlx-hairpin-Hlx_DNA-bd_motif"/>
</dbReference>
<dbReference type="InterPro" id="IPR012340">
    <property type="entry name" value="NA-bd_OB-fold"/>
</dbReference>
<dbReference type="InterPro" id="IPR004150">
    <property type="entry name" value="NAD_DNA_ligase_OB"/>
</dbReference>
<dbReference type="InterPro" id="IPR010994">
    <property type="entry name" value="RuvA_2-like"/>
</dbReference>
<dbReference type="InterPro" id="IPR004149">
    <property type="entry name" value="Znf_DNAligase_C4"/>
</dbReference>
<dbReference type="NCBIfam" id="TIGR00575">
    <property type="entry name" value="dnlj"/>
    <property type="match status" value="1"/>
</dbReference>
<dbReference type="NCBIfam" id="NF005932">
    <property type="entry name" value="PRK07956.1"/>
    <property type="match status" value="1"/>
</dbReference>
<dbReference type="PANTHER" id="PTHR23389">
    <property type="entry name" value="CHROMOSOME TRANSMISSION FIDELITY FACTOR 18"/>
    <property type="match status" value="1"/>
</dbReference>
<dbReference type="PANTHER" id="PTHR23389:SF9">
    <property type="entry name" value="DNA LIGASE"/>
    <property type="match status" value="1"/>
</dbReference>
<dbReference type="Pfam" id="PF00533">
    <property type="entry name" value="BRCT"/>
    <property type="match status" value="1"/>
</dbReference>
<dbReference type="Pfam" id="PF01653">
    <property type="entry name" value="DNA_ligase_aden"/>
    <property type="match status" value="1"/>
</dbReference>
<dbReference type="Pfam" id="PF03120">
    <property type="entry name" value="DNA_ligase_OB"/>
    <property type="match status" value="1"/>
</dbReference>
<dbReference type="Pfam" id="PF03119">
    <property type="entry name" value="DNA_ligase_ZBD"/>
    <property type="match status" value="1"/>
</dbReference>
<dbReference type="Pfam" id="PF12826">
    <property type="entry name" value="HHH_2"/>
    <property type="match status" value="1"/>
</dbReference>
<dbReference type="Pfam" id="PF14520">
    <property type="entry name" value="HHH_5"/>
    <property type="match status" value="1"/>
</dbReference>
<dbReference type="Pfam" id="PF22745">
    <property type="entry name" value="Nlig-Ia"/>
    <property type="match status" value="1"/>
</dbReference>
<dbReference type="PIRSF" id="PIRSF001604">
    <property type="entry name" value="LigA"/>
    <property type="match status" value="1"/>
</dbReference>
<dbReference type="SMART" id="SM00292">
    <property type="entry name" value="BRCT"/>
    <property type="match status" value="1"/>
</dbReference>
<dbReference type="SMART" id="SM00278">
    <property type="entry name" value="HhH1"/>
    <property type="match status" value="4"/>
</dbReference>
<dbReference type="SMART" id="SM00532">
    <property type="entry name" value="LIGANc"/>
    <property type="match status" value="1"/>
</dbReference>
<dbReference type="SUPFAM" id="SSF52113">
    <property type="entry name" value="BRCT domain"/>
    <property type="match status" value="1"/>
</dbReference>
<dbReference type="SUPFAM" id="SSF56091">
    <property type="entry name" value="DNA ligase/mRNA capping enzyme, catalytic domain"/>
    <property type="match status" value="1"/>
</dbReference>
<dbReference type="SUPFAM" id="SSF50249">
    <property type="entry name" value="Nucleic acid-binding proteins"/>
    <property type="match status" value="1"/>
</dbReference>
<dbReference type="SUPFAM" id="SSF47781">
    <property type="entry name" value="RuvA domain 2-like"/>
    <property type="match status" value="1"/>
</dbReference>
<dbReference type="PROSITE" id="PS50172">
    <property type="entry name" value="BRCT"/>
    <property type="match status" value="1"/>
</dbReference>
<dbReference type="PROSITE" id="PS01055">
    <property type="entry name" value="DNA_LIGASE_N1"/>
    <property type="match status" value="1"/>
</dbReference>
<dbReference type="PROSITE" id="PS01056">
    <property type="entry name" value="DNA_LIGASE_N2"/>
    <property type="match status" value="1"/>
</dbReference>
<feature type="chain" id="PRO_0000313420" description="DNA ligase">
    <location>
        <begin position="1"/>
        <end position="671"/>
    </location>
</feature>
<feature type="domain" description="BRCT" evidence="1">
    <location>
        <begin position="593"/>
        <end position="671"/>
    </location>
</feature>
<feature type="active site" description="N6-AMP-lysine intermediate" evidence="1">
    <location>
        <position position="115"/>
    </location>
</feature>
<feature type="binding site" evidence="1">
    <location>
        <begin position="32"/>
        <end position="36"/>
    </location>
    <ligand>
        <name>NAD(+)</name>
        <dbReference type="ChEBI" id="CHEBI:57540"/>
    </ligand>
</feature>
<feature type="binding site" evidence="1">
    <location>
        <begin position="81"/>
        <end position="82"/>
    </location>
    <ligand>
        <name>NAD(+)</name>
        <dbReference type="ChEBI" id="CHEBI:57540"/>
    </ligand>
</feature>
<feature type="binding site" evidence="1">
    <location>
        <position position="113"/>
    </location>
    <ligand>
        <name>NAD(+)</name>
        <dbReference type="ChEBI" id="CHEBI:57540"/>
    </ligand>
</feature>
<feature type="binding site" evidence="1">
    <location>
        <position position="136"/>
    </location>
    <ligand>
        <name>NAD(+)</name>
        <dbReference type="ChEBI" id="CHEBI:57540"/>
    </ligand>
</feature>
<feature type="binding site" evidence="1">
    <location>
        <position position="173"/>
    </location>
    <ligand>
        <name>NAD(+)</name>
        <dbReference type="ChEBI" id="CHEBI:57540"/>
    </ligand>
</feature>
<feature type="binding site" evidence="1">
    <location>
        <position position="290"/>
    </location>
    <ligand>
        <name>NAD(+)</name>
        <dbReference type="ChEBI" id="CHEBI:57540"/>
    </ligand>
</feature>
<feature type="binding site" evidence="1">
    <location>
        <position position="314"/>
    </location>
    <ligand>
        <name>NAD(+)</name>
        <dbReference type="ChEBI" id="CHEBI:57540"/>
    </ligand>
</feature>
<feature type="binding site" evidence="1">
    <location>
        <position position="408"/>
    </location>
    <ligand>
        <name>Zn(2+)</name>
        <dbReference type="ChEBI" id="CHEBI:29105"/>
    </ligand>
</feature>
<feature type="binding site" evidence="1">
    <location>
        <position position="411"/>
    </location>
    <ligand>
        <name>Zn(2+)</name>
        <dbReference type="ChEBI" id="CHEBI:29105"/>
    </ligand>
</feature>
<feature type="binding site" evidence="1">
    <location>
        <position position="426"/>
    </location>
    <ligand>
        <name>Zn(2+)</name>
        <dbReference type="ChEBI" id="CHEBI:29105"/>
    </ligand>
</feature>
<feature type="binding site" evidence="1">
    <location>
        <position position="432"/>
    </location>
    <ligand>
        <name>Zn(2+)</name>
        <dbReference type="ChEBI" id="CHEBI:29105"/>
    </ligand>
</feature>
<feature type="sequence conflict" description="In Ref. 2; AAO68148." evidence="2" ref="2">
    <original>T</original>
    <variation>A</variation>
    <location>
        <position position="179"/>
    </location>
</feature>
<organism>
    <name type="scientific">Salmonella typhi</name>
    <dbReference type="NCBI Taxonomy" id="90370"/>
    <lineage>
        <taxon>Bacteria</taxon>
        <taxon>Pseudomonadati</taxon>
        <taxon>Pseudomonadota</taxon>
        <taxon>Gammaproteobacteria</taxon>
        <taxon>Enterobacterales</taxon>
        <taxon>Enterobacteriaceae</taxon>
        <taxon>Salmonella</taxon>
    </lineage>
</organism>
<proteinExistence type="inferred from homology"/>
<comment type="function">
    <text evidence="1">DNA ligase that catalyzes the formation of phosphodiester linkages between 5'-phosphoryl and 3'-hydroxyl groups in double-stranded DNA using NAD as a coenzyme and as the energy source for the reaction. It is essential for DNA replication and repair of damaged DNA.</text>
</comment>
<comment type="catalytic activity">
    <reaction evidence="1">
        <text>NAD(+) + (deoxyribonucleotide)n-3'-hydroxyl + 5'-phospho-(deoxyribonucleotide)m = (deoxyribonucleotide)n+m + AMP + beta-nicotinamide D-nucleotide.</text>
        <dbReference type="EC" id="6.5.1.2"/>
    </reaction>
</comment>
<comment type="cofactor">
    <cofactor evidence="1">
        <name>Mg(2+)</name>
        <dbReference type="ChEBI" id="CHEBI:18420"/>
    </cofactor>
    <cofactor evidence="1">
        <name>Mn(2+)</name>
        <dbReference type="ChEBI" id="CHEBI:29035"/>
    </cofactor>
</comment>
<comment type="similarity">
    <text evidence="1">Belongs to the NAD-dependent DNA ligase family. LigA subfamily.</text>
</comment>